<name>ATPA_IDILO</name>
<keyword id="KW-0066">ATP synthesis</keyword>
<keyword id="KW-0067">ATP-binding</keyword>
<keyword id="KW-0997">Cell inner membrane</keyword>
<keyword id="KW-1003">Cell membrane</keyword>
<keyword id="KW-0139">CF(1)</keyword>
<keyword id="KW-0375">Hydrogen ion transport</keyword>
<keyword id="KW-0406">Ion transport</keyword>
<keyword id="KW-0472">Membrane</keyword>
<keyword id="KW-0547">Nucleotide-binding</keyword>
<keyword id="KW-1185">Reference proteome</keyword>
<keyword id="KW-1278">Translocase</keyword>
<keyword id="KW-0813">Transport</keyword>
<evidence type="ECO:0000255" key="1">
    <source>
        <dbReference type="HAMAP-Rule" id="MF_01346"/>
    </source>
</evidence>
<accession>Q5QZI4</accession>
<reference key="1">
    <citation type="journal article" date="2004" name="Proc. Natl. Acad. Sci. U.S.A.">
        <title>Genome sequence of the deep-sea gamma-proteobacterium Idiomarina loihiensis reveals amino acid fermentation as a source of carbon and energy.</title>
        <authorList>
            <person name="Hou S."/>
            <person name="Saw J.H."/>
            <person name="Lee K.S."/>
            <person name="Freitas T.A."/>
            <person name="Belisle C."/>
            <person name="Kawarabayasi Y."/>
            <person name="Donachie S.P."/>
            <person name="Pikina A."/>
            <person name="Galperin M.Y."/>
            <person name="Koonin E.V."/>
            <person name="Makarova K.S."/>
            <person name="Omelchenko M.V."/>
            <person name="Sorokin A."/>
            <person name="Wolf Y.I."/>
            <person name="Li Q.X."/>
            <person name="Keum Y.S."/>
            <person name="Campbell S."/>
            <person name="Denery J."/>
            <person name="Aizawa S."/>
            <person name="Shibata S."/>
            <person name="Malahoff A."/>
            <person name="Alam M."/>
        </authorList>
    </citation>
    <scope>NUCLEOTIDE SEQUENCE [LARGE SCALE GENOMIC DNA]</scope>
    <source>
        <strain>ATCC BAA-735 / DSM 15497 / L2-TR</strain>
    </source>
</reference>
<feature type="chain" id="PRO_0000238264" description="ATP synthase subunit alpha">
    <location>
        <begin position="1"/>
        <end position="513"/>
    </location>
</feature>
<feature type="binding site" evidence="1">
    <location>
        <begin position="169"/>
        <end position="176"/>
    </location>
    <ligand>
        <name>ATP</name>
        <dbReference type="ChEBI" id="CHEBI:30616"/>
    </ligand>
</feature>
<feature type="site" description="Required for activity" evidence="1">
    <location>
        <position position="373"/>
    </location>
</feature>
<dbReference type="EC" id="7.1.2.2" evidence="1"/>
<dbReference type="EMBL" id="AE017340">
    <property type="protein sequence ID" value="AAV83453.1"/>
    <property type="molecule type" value="Genomic_DNA"/>
</dbReference>
<dbReference type="RefSeq" id="WP_011235844.1">
    <property type="nucleotide sequence ID" value="NC_006512.1"/>
</dbReference>
<dbReference type="SMR" id="Q5QZI4"/>
<dbReference type="STRING" id="283942.IL2621"/>
<dbReference type="GeneID" id="41337820"/>
<dbReference type="KEGG" id="ilo:IL2621"/>
<dbReference type="eggNOG" id="COG0056">
    <property type="taxonomic scope" value="Bacteria"/>
</dbReference>
<dbReference type="HOGENOM" id="CLU_010091_2_1_6"/>
<dbReference type="OrthoDB" id="9803053at2"/>
<dbReference type="Proteomes" id="UP000001171">
    <property type="component" value="Chromosome"/>
</dbReference>
<dbReference type="GO" id="GO:0005886">
    <property type="term" value="C:plasma membrane"/>
    <property type="evidence" value="ECO:0007669"/>
    <property type="project" value="UniProtKB-SubCell"/>
</dbReference>
<dbReference type="GO" id="GO:0045259">
    <property type="term" value="C:proton-transporting ATP synthase complex"/>
    <property type="evidence" value="ECO:0007669"/>
    <property type="project" value="UniProtKB-KW"/>
</dbReference>
<dbReference type="GO" id="GO:0043531">
    <property type="term" value="F:ADP binding"/>
    <property type="evidence" value="ECO:0007669"/>
    <property type="project" value="TreeGrafter"/>
</dbReference>
<dbReference type="GO" id="GO:0005524">
    <property type="term" value="F:ATP binding"/>
    <property type="evidence" value="ECO:0007669"/>
    <property type="project" value="UniProtKB-UniRule"/>
</dbReference>
<dbReference type="GO" id="GO:0046933">
    <property type="term" value="F:proton-transporting ATP synthase activity, rotational mechanism"/>
    <property type="evidence" value="ECO:0007669"/>
    <property type="project" value="UniProtKB-UniRule"/>
</dbReference>
<dbReference type="CDD" id="cd18113">
    <property type="entry name" value="ATP-synt_F1_alpha_C"/>
    <property type="match status" value="1"/>
</dbReference>
<dbReference type="CDD" id="cd18116">
    <property type="entry name" value="ATP-synt_F1_alpha_N"/>
    <property type="match status" value="1"/>
</dbReference>
<dbReference type="CDD" id="cd01132">
    <property type="entry name" value="F1-ATPase_alpha_CD"/>
    <property type="match status" value="1"/>
</dbReference>
<dbReference type="FunFam" id="1.20.150.20:FF:000001">
    <property type="entry name" value="ATP synthase subunit alpha"/>
    <property type="match status" value="1"/>
</dbReference>
<dbReference type="FunFam" id="2.40.30.20:FF:000001">
    <property type="entry name" value="ATP synthase subunit alpha"/>
    <property type="match status" value="1"/>
</dbReference>
<dbReference type="FunFam" id="3.40.50.300:FF:000002">
    <property type="entry name" value="ATP synthase subunit alpha"/>
    <property type="match status" value="1"/>
</dbReference>
<dbReference type="Gene3D" id="2.40.30.20">
    <property type="match status" value="1"/>
</dbReference>
<dbReference type="Gene3D" id="1.20.150.20">
    <property type="entry name" value="ATP synthase alpha/beta chain, C-terminal domain"/>
    <property type="match status" value="1"/>
</dbReference>
<dbReference type="Gene3D" id="3.40.50.300">
    <property type="entry name" value="P-loop containing nucleotide triphosphate hydrolases"/>
    <property type="match status" value="1"/>
</dbReference>
<dbReference type="HAMAP" id="MF_01346">
    <property type="entry name" value="ATP_synth_alpha_bact"/>
    <property type="match status" value="1"/>
</dbReference>
<dbReference type="InterPro" id="IPR023366">
    <property type="entry name" value="ATP_synth_asu-like_sf"/>
</dbReference>
<dbReference type="InterPro" id="IPR000793">
    <property type="entry name" value="ATP_synth_asu_C"/>
</dbReference>
<dbReference type="InterPro" id="IPR038376">
    <property type="entry name" value="ATP_synth_asu_C_sf"/>
</dbReference>
<dbReference type="InterPro" id="IPR033732">
    <property type="entry name" value="ATP_synth_F1_a_nt-bd_dom"/>
</dbReference>
<dbReference type="InterPro" id="IPR005294">
    <property type="entry name" value="ATP_synth_F1_asu"/>
</dbReference>
<dbReference type="InterPro" id="IPR020003">
    <property type="entry name" value="ATPase_a/bsu_AS"/>
</dbReference>
<dbReference type="InterPro" id="IPR004100">
    <property type="entry name" value="ATPase_F1/V1/A1_a/bsu_N"/>
</dbReference>
<dbReference type="InterPro" id="IPR036121">
    <property type="entry name" value="ATPase_F1/V1/A1_a/bsu_N_sf"/>
</dbReference>
<dbReference type="InterPro" id="IPR000194">
    <property type="entry name" value="ATPase_F1/V1/A1_a/bsu_nucl-bd"/>
</dbReference>
<dbReference type="InterPro" id="IPR027417">
    <property type="entry name" value="P-loop_NTPase"/>
</dbReference>
<dbReference type="NCBIfam" id="TIGR00962">
    <property type="entry name" value="atpA"/>
    <property type="match status" value="1"/>
</dbReference>
<dbReference type="NCBIfam" id="NF009884">
    <property type="entry name" value="PRK13343.1"/>
    <property type="match status" value="1"/>
</dbReference>
<dbReference type="PANTHER" id="PTHR48082">
    <property type="entry name" value="ATP SYNTHASE SUBUNIT ALPHA, MITOCHONDRIAL"/>
    <property type="match status" value="1"/>
</dbReference>
<dbReference type="PANTHER" id="PTHR48082:SF2">
    <property type="entry name" value="ATP SYNTHASE SUBUNIT ALPHA, MITOCHONDRIAL"/>
    <property type="match status" value="1"/>
</dbReference>
<dbReference type="Pfam" id="PF00006">
    <property type="entry name" value="ATP-synt_ab"/>
    <property type="match status" value="1"/>
</dbReference>
<dbReference type="Pfam" id="PF00306">
    <property type="entry name" value="ATP-synt_ab_C"/>
    <property type="match status" value="1"/>
</dbReference>
<dbReference type="Pfam" id="PF02874">
    <property type="entry name" value="ATP-synt_ab_N"/>
    <property type="match status" value="1"/>
</dbReference>
<dbReference type="SUPFAM" id="SSF47917">
    <property type="entry name" value="C-terminal domain of alpha and beta subunits of F1 ATP synthase"/>
    <property type="match status" value="1"/>
</dbReference>
<dbReference type="SUPFAM" id="SSF50615">
    <property type="entry name" value="N-terminal domain of alpha and beta subunits of F1 ATP synthase"/>
    <property type="match status" value="1"/>
</dbReference>
<dbReference type="SUPFAM" id="SSF52540">
    <property type="entry name" value="P-loop containing nucleoside triphosphate hydrolases"/>
    <property type="match status" value="1"/>
</dbReference>
<dbReference type="PROSITE" id="PS00152">
    <property type="entry name" value="ATPASE_ALPHA_BETA"/>
    <property type="match status" value="1"/>
</dbReference>
<sequence>MQLNSNEIAELIKQRIEKFEVTSEARNEGTIMSVQDGIIRIHGLADCLQGEMVELPGNRYAIALNLERDSVGAVVMGPYADLQEGTKVKSTGRILEVPVGEKLLGRVVNTLGQPIDGKGPIEADGYEPVEKIAPGVIERQSVDQPVQTGYKSIDSMIPVGRGQRELIIGDRQTGKTALAVDAIINQKDSGIKCVYVAIGQKNSTISAVVRKLEEHGAMENTIVVAASASESAALQYLAAYSGCTMGEYFRDRGEDALIVYDDLSKQAVAYRQISLLLRRPPGREAFPGDVFYLHSRLLERAARVNADYVEKFTDGKVKGQTGSLTALPIIETQAGDVSAFVPTNVISITDGQIFLETDLFNSGIRPAVNAGVSVSRVGGSAQTKIIKKLGGGIRLALAQYRELAAFAQFASDLDESTRSQLEHGQRVTELMKQKQYKPMSVAQMAVSIYAVEKGFLKDVEIDKIMDFEESLQSFMASEYAELMAEIDKTGNYNDDIDAQLKAALEKFKQTQSW</sequence>
<gene>
    <name evidence="1" type="primary">atpA</name>
    <name type="ordered locus">IL2621</name>
</gene>
<protein>
    <recommendedName>
        <fullName evidence="1">ATP synthase subunit alpha</fullName>
        <ecNumber evidence="1">7.1.2.2</ecNumber>
    </recommendedName>
    <alternativeName>
        <fullName evidence="1">ATP synthase F1 sector subunit alpha</fullName>
    </alternativeName>
    <alternativeName>
        <fullName evidence="1">F-ATPase subunit alpha</fullName>
    </alternativeName>
</protein>
<comment type="function">
    <text evidence="1">Produces ATP from ADP in the presence of a proton gradient across the membrane. The alpha chain is a regulatory subunit.</text>
</comment>
<comment type="catalytic activity">
    <reaction evidence="1">
        <text>ATP + H2O + 4 H(+)(in) = ADP + phosphate + 5 H(+)(out)</text>
        <dbReference type="Rhea" id="RHEA:57720"/>
        <dbReference type="ChEBI" id="CHEBI:15377"/>
        <dbReference type="ChEBI" id="CHEBI:15378"/>
        <dbReference type="ChEBI" id="CHEBI:30616"/>
        <dbReference type="ChEBI" id="CHEBI:43474"/>
        <dbReference type="ChEBI" id="CHEBI:456216"/>
        <dbReference type="EC" id="7.1.2.2"/>
    </reaction>
</comment>
<comment type="subunit">
    <text evidence="1">F-type ATPases have 2 components, CF(1) - the catalytic core - and CF(0) - the membrane proton channel. CF(1) has five subunits: alpha(3), beta(3), gamma(1), delta(1), epsilon(1). CF(0) has three main subunits: a(1), b(2) and c(9-12). The alpha and beta chains form an alternating ring which encloses part of the gamma chain. CF(1) is attached to CF(0) by a central stalk formed by the gamma and epsilon chains, while a peripheral stalk is formed by the delta and b chains.</text>
</comment>
<comment type="subcellular location">
    <subcellularLocation>
        <location evidence="1">Cell inner membrane</location>
        <topology evidence="1">Peripheral membrane protein</topology>
    </subcellularLocation>
</comment>
<comment type="similarity">
    <text evidence="1">Belongs to the ATPase alpha/beta chains family.</text>
</comment>
<organism>
    <name type="scientific">Idiomarina loihiensis (strain ATCC BAA-735 / DSM 15497 / L2-TR)</name>
    <dbReference type="NCBI Taxonomy" id="283942"/>
    <lineage>
        <taxon>Bacteria</taxon>
        <taxon>Pseudomonadati</taxon>
        <taxon>Pseudomonadota</taxon>
        <taxon>Gammaproteobacteria</taxon>
        <taxon>Alteromonadales</taxon>
        <taxon>Idiomarinaceae</taxon>
        <taxon>Idiomarina</taxon>
    </lineage>
</organism>
<proteinExistence type="inferred from homology"/>